<organism>
    <name type="scientific">Nitrosomonas eutropha (strain DSM 101675 / C91 / Nm57)</name>
    <dbReference type="NCBI Taxonomy" id="335283"/>
    <lineage>
        <taxon>Bacteria</taxon>
        <taxon>Pseudomonadati</taxon>
        <taxon>Pseudomonadota</taxon>
        <taxon>Betaproteobacteria</taxon>
        <taxon>Nitrosomonadales</taxon>
        <taxon>Nitrosomonadaceae</taxon>
        <taxon>Nitrosomonas</taxon>
    </lineage>
</organism>
<gene>
    <name evidence="1" type="primary">miaB</name>
    <name type="ordered locus">Neut_1789</name>
</gene>
<accession>Q0AF59</accession>
<keyword id="KW-0004">4Fe-4S</keyword>
<keyword id="KW-0963">Cytoplasm</keyword>
<keyword id="KW-0408">Iron</keyword>
<keyword id="KW-0411">Iron-sulfur</keyword>
<keyword id="KW-0479">Metal-binding</keyword>
<keyword id="KW-0949">S-adenosyl-L-methionine</keyword>
<keyword id="KW-0808">Transferase</keyword>
<keyword id="KW-0819">tRNA processing</keyword>
<proteinExistence type="inferred from homology"/>
<name>MIAB_NITEC</name>
<comment type="function">
    <text evidence="1">Catalyzes the methylthiolation of N6-(dimethylallyl)adenosine (i(6)A), leading to the formation of 2-methylthio-N6-(dimethylallyl)adenosine (ms(2)i(6)A) at position 37 in tRNAs that read codons beginning with uridine.</text>
</comment>
<comment type="catalytic activity">
    <reaction evidence="1">
        <text>N(6)-dimethylallyladenosine(37) in tRNA + (sulfur carrier)-SH + AH2 + 2 S-adenosyl-L-methionine = 2-methylsulfanyl-N(6)-dimethylallyladenosine(37) in tRNA + (sulfur carrier)-H + 5'-deoxyadenosine + L-methionine + A + S-adenosyl-L-homocysteine + 2 H(+)</text>
        <dbReference type="Rhea" id="RHEA:37067"/>
        <dbReference type="Rhea" id="RHEA-COMP:10375"/>
        <dbReference type="Rhea" id="RHEA-COMP:10376"/>
        <dbReference type="Rhea" id="RHEA-COMP:14737"/>
        <dbReference type="Rhea" id="RHEA-COMP:14739"/>
        <dbReference type="ChEBI" id="CHEBI:13193"/>
        <dbReference type="ChEBI" id="CHEBI:15378"/>
        <dbReference type="ChEBI" id="CHEBI:17319"/>
        <dbReference type="ChEBI" id="CHEBI:17499"/>
        <dbReference type="ChEBI" id="CHEBI:29917"/>
        <dbReference type="ChEBI" id="CHEBI:57844"/>
        <dbReference type="ChEBI" id="CHEBI:57856"/>
        <dbReference type="ChEBI" id="CHEBI:59789"/>
        <dbReference type="ChEBI" id="CHEBI:64428"/>
        <dbReference type="ChEBI" id="CHEBI:74415"/>
        <dbReference type="ChEBI" id="CHEBI:74417"/>
        <dbReference type="EC" id="2.8.4.3"/>
    </reaction>
</comment>
<comment type="cofactor">
    <cofactor evidence="1">
        <name>[4Fe-4S] cluster</name>
        <dbReference type="ChEBI" id="CHEBI:49883"/>
    </cofactor>
    <text evidence="1">Binds 2 [4Fe-4S] clusters. One cluster is coordinated with 3 cysteines and an exchangeable S-adenosyl-L-methionine.</text>
</comment>
<comment type="subunit">
    <text evidence="1">Monomer.</text>
</comment>
<comment type="subcellular location">
    <subcellularLocation>
        <location evidence="1">Cytoplasm</location>
    </subcellularLocation>
</comment>
<comment type="similarity">
    <text evidence="1">Belongs to the methylthiotransferase family. MiaB subfamily.</text>
</comment>
<evidence type="ECO:0000255" key="1">
    <source>
        <dbReference type="HAMAP-Rule" id="MF_01864"/>
    </source>
</evidence>
<evidence type="ECO:0000255" key="2">
    <source>
        <dbReference type="PROSITE-ProRule" id="PRU01266"/>
    </source>
</evidence>
<protein>
    <recommendedName>
        <fullName evidence="1">tRNA-2-methylthio-N(6)-dimethylallyladenosine synthase</fullName>
        <ecNumber evidence="1">2.8.4.3</ecNumber>
    </recommendedName>
    <alternativeName>
        <fullName evidence="1">(Dimethylallyl)adenosine tRNA methylthiotransferase MiaB</fullName>
    </alternativeName>
    <alternativeName>
        <fullName evidence="1">tRNA-i(6)A37 methylthiotransferase</fullName>
    </alternativeName>
</protein>
<dbReference type="EC" id="2.8.4.3" evidence="1"/>
<dbReference type="EMBL" id="CP000450">
    <property type="protein sequence ID" value="ABI60023.1"/>
    <property type="molecule type" value="Genomic_DNA"/>
</dbReference>
<dbReference type="RefSeq" id="WP_011634829.1">
    <property type="nucleotide sequence ID" value="NC_008344.1"/>
</dbReference>
<dbReference type="SMR" id="Q0AF59"/>
<dbReference type="STRING" id="335283.Neut_1789"/>
<dbReference type="KEGG" id="net:Neut_1789"/>
<dbReference type="eggNOG" id="COG0621">
    <property type="taxonomic scope" value="Bacteria"/>
</dbReference>
<dbReference type="HOGENOM" id="CLU_018697_2_0_4"/>
<dbReference type="OrthoDB" id="9805215at2"/>
<dbReference type="Proteomes" id="UP000001966">
    <property type="component" value="Chromosome"/>
</dbReference>
<dbReference type="GO" id="GO:0005829">
    <property type="term" value="C:cytosol"/>
    <property type="evidence" value="ECO:0007669"/>
    <property type="project" value="TreeGrafter"/>
</dbReference>
<dbReference type="GO" id="GO:0051539">
    <property type="term" value="F:4 iron, 4 sulfur cluster binding"/>
    <property type="evidence" value="ECO:0007669"/>
    <property type="project" value="UniProtKB-UniRule"/>
</dbReference>
<dbReference type="GO" id="GO:0046872">
    <property type="term" value="F:metal ion binding"/>
    <property type="evidence" value="ECO:0007669"/>
    <property type="project" value="UniProtKB-KW"/>
</dbReference>
<dbReference type="GO" id="GO:0035597">
    <property type="term" value="F:N6-isopentenyladenosine methylthiotransferase activity"/>
    <property type="evidence" value="ECO:0007669"/>
    <property type="project" value="TreeGrafter"/>
</dbReference>
<dbReference type="CDD" id="cd01335">
    <property type="entry name" value="Radical_SAM"/>
    <property type="match status" value="1"/>
</dbReference>
<dbReference type="FunFam" id="3.40.50.12160:FF:000001">
    <property type="entry name" value="tRNA-2-methylthio-N(6)-dimethylallyladenosine synthase"/>
    <property type="match status" value="1"/>
</dbReference>
<dbReference type="FunFam" id="3.80.30.20:FF:000001">
    <property type="entry name" value="tRNA-2-methylthio-N(6)-dimethylallyladenosine synthase 2"/>
    <property type="match status" value="1"/>
</dbReference>
<dbReference type="Gene3D" id="3.40.50.12160">
    <property type="entry name" value="Methylthiotransferase, N-terminal domain"/>
    <property type="match status" value="1"/>
</dbReference>
<dbReference type="Gene3D" id="3.80.30.20">
    <property type="entry name" value="tm_1862 like domain"/>
    <property type="match status" value="1"/>
</dbReference>
<dbReference type="HAMAP" id="MF_01864">
    <property type="entry name" value="tRNA_metthiotr_MiaB"/>
    <property type="match status" value="1"/>
</dbReference>
<dbReference type="InterPro" id="IPR006638">
    <property type="entry name" value="Elp3/MiaA/NifB-like_rSAM"/>
</dbReference>
<dbReference type="InterPro" id="IPR005839">
    <property type="entry name" value="Methylthiotransferase"/>
</dbReference>
<dbReference type="InterPro" id="IPR020612">
    <property type="entry name" value="Methylthiotransferase_CS"/>
</dbReference>
<dbReference type="InterPro" id="IPR013848">
    <property type="entry name" value="Methylthiotransferase_N"/>
</dbReference>
<dbReference type="InterPro" id="IPR038135">
    <property type="entry name" value="Methylthiotransferase_N_sf"/>
</dbReference>
<dbReference type="InterPro" id="IPR006463">
    <property type="entry name" value="MiaB_methiolase"/>
</dbReference>
<dbReference type="InterPro" id="IPR007197">
    <property type="entry name" value="rSAM"/>
</dbReference>
<dbReference type="InterPro" id="IPR023404">
    <property type="entry name" value="rSAM_horseshoe"/>
</dbReference>
<dbReference type="InterPro" id="IPR002792">
    <property type="entry name" value="TRAM_dom"/>
</dbReference>
<dbReference type="NCBIfam" id="TIGR01574">
    <property type="entry name" value="miaB-methiolase"/>
    <property type="match status" value="1"/>
</dbReference>
<dbReference type="NCBIfam" id="TIGR00089">
    <property type="entry name" value="MiaB/RimO family radical SAM methylthiotransferase"/>
    <property type="match status" value="1"/>
</dbReference>
<dbReference type="PANTHER" id="PTHR43020">
    <property type="entry name" value="CDK5 REGULATORY SUBUNIT-ASSOCIATED PROTEIN 1"/>
    <property type="match status" value="1"/>
</dbReference>
<dbReference type="PANTHER" id="PTHR43020:SF2">
    <property type="entry name" value="MITOCHONDRIAL TRNA METHYLTHIOTRANSFERASE CDK5RAP1"/>
    <property type="match status" value="1"/>
</dbReference>
<dbReference type="Pfam" id="PF04055">
    <property type="entry name" value="Radical_SAM"/>
    <property type="match status" value="1"/>
</dbReference>
<dbReference type="Pfam" id="PF01938">
    <property type="entry name" value="TRAM"/>
    <property type="match status" value="1"/>
</dbReference>
<dbReference type="Pfam" id="PF00919">
    <property type="entry name" value="UPF0004"/>
    <property type="match status" value="1"/>
</dbReference>
<dbReference type="SFLD" id="SFLDF00273">
    <property type="entry name" value="(dimethylallyl)adenosine_tRNA"/>
    <property type="match status" value="1"/>
</dbReference>
<dbReference type="SFLD" id="SFLDG01082">
    <property type="entry name" value="B12-binding_domain_containing"/>
    <property type="match status" value="1"/>
</dbReference>
<dbReference type="SFLD" id="SFLDS00029">
    <property type="entry name" value="Radical_SAM"/>
    <property type="match status" value="1"/>
</dbReference>
<dbReference type="SMART" id="SM00729">
    <property type="entry name" value="Elp3"/>
    <property type="match status" value="1"/>
</dbReference>
<dbReference type="SUPFAM" id="SSF102114">
    <property type="entry name" value="Radical SAM enzymes"/>
    <property type="match status" value="1"/>
</dbReference>
<dbReference type="PROSITE" id="PS51449">
    <property type="entry name" value="MTTASE_N"/>
    <property type="match status" value="1"/>
</dbReference>
<dbReference type="PROSITE" id="PS01278">
    <property type="entry name" value="MTTASE_RADICAL"/>
    <property type="match status" value="1"/>
</dbReference>
<dbReference type="PROSITE" id="PS51918">
    <property type="entry name" value="RADICAL_SAM"/>
    <property type="match status" value="1"/>
</dbReference>
<dbReference type="PROSITE" id="PS50926">
    <property type="entry name" value="TRAM"/>
    <property type="match status" value="1"/>
</dbReference>
<feature type="chain" id="PRO_0000374412" description="tRNA-2-methylthio-N(6)-dimethylallyladenosine synthase">
    <location>
        <begin position="1"/>
        <end position="443"/>
    </location>
</feature>
<feature type="domain" description="MTTase N-terminal" evidence="1">
    <location>
        <begin position="3"/>
        <end position="120"/>
    </location>
</feature>
<feature type="domain" description="Radical SAM core" evidence="2">
    <location>
        <begin position="143"/>
        <end position="377"/>
    </location>
</feature>
<feature type="domain" description="TRAM" evidence="1">
    <location>
        <begin position="378"/>
        <end position="441"/>
    </location>
</feature>
<feature type="binding site" evidence="1">
    <location>
        <position position="12"/>
    </location>
    <ligand>
        <name>[4Fe-4S] cluster</name>
        <dbReference type="ChEBI" id="CHEBI:49883"/>
        <label>1</label>
    </ligand>
</feature>
<feature type="binding site" evidence="1">
    <location>
        <position position="49"/>
    </location>
    <ligand>
        <name>[4Fe-4S] cluster</name>
        <dbReference type="ChEBI" id="CHEBI:49883"/>
        <label>1</label>
    </ligand>
</feature>
<feature type="binding site" evidence="1">
    <location>
        <position position="83"/>
    </location>
    <ligand>
        <name>[4Fe-4S] cluster</name>
        <dbReference type="ChEBI" id="CHEBI:49883"/>
        <label>1</label>
    </ligand>
</feature>
<feature type="binding site" evidence="1">
    <location>
        <position position="157"/>
    </location>
    <ligand>
        <name>[4Fe-4S] cluster</name>
        <dbReference type="ChEBI" id="CHEBI:49883"/>
        <label>2</label>
        <note>4Fe-4S-S-AdoMet</note>
    </ligand>
</feature>
<feature type="binding site" evidence="1">
    <location>
        <position position="161"/>
    </location>
    <ligand>
        <name>[4Fe-4S] cluster</name>
        <dbReference type="ChEBI" id="CHEBI:49883"/>
        <label>2</label>
        <note>4Fe-4S-S-AdoMet</note>
    </ligand>
</feature>
<feature type="binding site" evidence="1">
    <location>
        <position position="164"/>
    </location>
    <ligand>
        <name>[4Fe-4S] cluster</name>
        <dbReference type="ChEBI" id="CHEBI:49883"/>
        <label>2</label>
        <note>4Fe-4S-S-AdoMet</note>
    </ligand>
</feature>
<reference key="1">
    <citation type="journal article" date="2007" name="Environ. Microbiol.">
        <title>Whole-genome analysis of the ammonia-oxidizing bacterium, Nitrosomonas eutropha C91: implications for niche adaptation.</title>
        <authorList>
            <person name="Stein L.Y."/>
            <person name="Arp D.J."/>
            <person name="Berube P.M."/>
            <person name="Chain P.S."/>
            <person name="Hauser L."/>
            <person name="Jetten M.S."/>
            <person name="Klotz M.G."/>
            <person name="Larimer F.W."/>
            <person name="Norton J.M."/>
            <person name="Op den Camp H.J.M."/>
            <person name="Shin M."/>
            <person name="Wei X."/>
        </authorList>
    </citation>
    <scope>NUCLEOTIDE SEQUENCE [LARGE SCALE GENOMIC DNA]</scope>
    <source>
        <strain>DSM 101675 / C91 / Nm57</strain>
    </source>
</reference>
<sequence>MSSKLYIKTFGCQMNEYDSAKMADILLSEKNMELTEVPEEADLILFNTCSVREKAQEKVFHDLGRVRHLKNSKPDLLIGVGGCVASQEGSEIVRRAPFVDLVFGPQTLHRLPELIDARRRTGQSQVDITFPEIEKFDRLPPARTTGATAFVSIMEGCSKYCSFCVVPYTRGEEVSRPLDDVLTEVAGLVIQGVKEVTLLGQNVNAYYDKTSGEGDIDFATLLDYIHEIPGLVRIRYTTSHPREFTARLIETYQRLPKLVGHVHLPIQSGSDRILAAMKRGYTIIEYKSIIRKLRTIRPNISISSDFIVGFPGETDTDFEETMKLIDDVKFDESFSFIYSPRPGTPASDLPDDTPYRIKLARLHQLQEKIQRNAQMISQSMVDTIQRVLVEGPSKKDPNEFCGRTDNNRVVNFAGHAGLVGSFVDIKITAVSSHTLRGEISDMQ</sequence>